<name>NUP42_XENTR</name>
<sequence>MAICSFFLQGRCRYGEKCWNEHPRGGSSRYQSQNRYQEPPGNAKGTWGSSSQRYVQPSSFSRSTTWVNRDNEKPSSGSHSGFDNRNVKFTAATGFPSSQNRFAALSSQDNSRDAQTDKGNIIDDITNDMEIWESSGQWMFSVYSMLREKKNISGFADFSPEELRLEYYACQAEGNPLKYINAVQQLGSKWKQRILELKNLNPSSKMALFNELSSPSSDMTSGYNGQQKPAFGSSSFPTNNTAPTAATFSFKADAANAAKAGATNSLAGSNVPAFGNKPTSAPSFGSGGAATAASFSFAPSSSSNFGATTSTSGFGNASNTASFQGTANSAAAPAFGVASSSTAATGFGGGFSTTGAMNTGVRDLFSAGTVGPGPVTSLFVQTTGPLHATASSTSLDGQSFRPSALNTTNSLFTPQNELSAEELAQFKAQRFTLGKIPLKPPPADLLNVS</sequence>
<comment type="function">
    <text evidence="1">Required for the export of mRNAs containing poly(A) tails from the nucleus into the cytoplasm.</text>
</comment>
<comment type="subunit">
    <text>Probable component of the nuclear pore complex (NPC).</text>
</comment>
<comment type="subcellular location">
    <subcellularLocation>
        <location evidence="2">Nucleus</location>
        <location evidence="2">Nuclear pore complex</location>
    </subcellularLocation>
    <subcellularLocation>
        <location evidence="2">Nucleus membrane</location>
        <topology evidence="2">Peripheral membrane protein</topology>
        <orientation evidence="2">Cytoplasmic side</orientation>
    </subcellularLocation>
</comment>
<comment type="domain">
    <text evidence="1">The FG repeats are interaction sites for karyopherins (importins, exportins) and form probably an affinity gradient, guiding the transport proteins unidirectionally with their cargo through the NPC.</text>
</comment>
<organism>
    <name type="scientific">Xenopus tropicalis</name>
    <name type="common">Western clawed frog</name>
    <name type="synonym">Silurana tropicalis</name>
    <dbReference type="NCBI Taxonomy" id="8364"/>
    <lineage>
        <taxon>Eukaryota</taxon>
        <taxon>Metazoa</taxon>
        <taxon>Chordata</taxon>
        <taxon>Craniata</taxon>
        <taxon>Vertebrata</taxon>
        <taxon>Euteleostomi</taxon>
        <taxon>Amphibia</taxon>
        <taxon>Batrachia</taxon>
        <taxon>Anura</taxon>
        <taxon>Pipoidea</taxon>
        <taxon>Pipidae</taxon>
        <taxon>Xenopodinae</taxon>
        <taxon>Xenopus</taxon>
        <taxon>Silurana</taxon>
    </lineage>
</organism>
<dbReference type="EMBL" id="BC089742">
    <property type="protein sequence ID" value="AAH89742.1"/>
    <property type="molecule type" value="mRNA"/>
</dbReference>
<dbReference type="RefSeq" id="NP_001015793.1">
    <property type="nucleotide sequence ID" value="NM_001015793.2"/>
</dbReference>
<dbReference type="RefSeq" id="XP_012820097.1">
    <property type="nucleotide sequence ID" value="XM_012964643.2"/>
</dbReference>
<dbReference type="RefSeq" id="XP_012820099.1">
    <property type="nucleotide sequence ID" value="XM_012964645.2"/>
</dbReference>
<dbReference type="RefSeq" id="XP_012820100.1">
    <property type="nucleotide sequence ID" value="XM_012964646.2"/>
</dbReference>
<dbReference type="RefSeq" id="XP_012820101.1">
    <property type="nucleotide sequence ID" value="XM_012964647.2"/>
</dbReference>
<dbReference type="SMR" id="Q5FVW4"/>
<dbReference type="FunCoup" id="Q5FVW4">
    <property type="interactions" value="3644"/>
</dbReference>
<dbReference type="STRING" id="8364.ENSXETP00000018599"/>
<dbReference type="PaxDb" id="8364-ENSXETP00000013054"/>
<dbReference type="DNASU" id="548510"/>
<dbReference type="GeneID" id="548510"/>
<dbReference type="KEGG" id="xtr:548510"/>
<dbReference type="AGR" id="Xenbase:XB-GENE-6258607"/>
<dbReference type="CTD" id="11097"/>
<dbReference type="Xenbase" id="XB-GENE-6258607">
    <property type="gene designation" value="nup42"/>
</dbReference>
<dbReference type="eggNOG" id="ENOG502R2TD">
    <property type="taxonomic scope" value="Eukaryota"/>
</dbReference>
<dbReference type="HOGENOM" id="CLU_048441_0_0_1"/>
<dbReference type="InParanoid" id="Q5FVW4"/>
<dbReference type="OMA" id="CHNEHFD"/>
<dbReference type="OrthoDB" id="20729at2759"/>
<dbReference type="PhylomeDB" id="Q5FVW4"/>
<dbReference type="TreeFam" id="TF106503"/>
<dbReference type="Reactome" id="R-XTR-170822">
    <property type="pathway name" value="Regulation of Glucokinase by Glucokinase Regulatory Protein"/>
</dbReference>
<dbReference type="Reactome" id="R-XTR-3108214">
    <property type="pathway name" value="SUMOylation of DNA damage response and repair proteins"/>
</dbReference>
<dbReference type="Reactome" id="R-XTR-3232142">
    <property type="pathway name" value="SUMOylation of ubiquitinylation proteins"/>
</dbReference>
<dbReference type="Reactome" id="R-XTR-3301854">
    <property type="pathway name" value="Nuclear Pore Complex (NPC) Disassembly"/>
</dbReference>
<dbReference type="Reactome" id="R-XTR-3371453">
    <property type="pathway name" value="Regulation of HSF1-mediated heat shock response"/>
</dbReference>
<dbReference type="Reactome" id="R-XTR-4085377">
    <property type="pathway name" value="SUMOylation of SUMOylation proteins"/>
</dbReference>
<dbReference type="Reactome" id="R-XTR-4570464">
    <property type="pathway name" value="SUMOylation of RNA binding proteins"/>
</dbReference>
<dbReference type="Reactome" id="R-XTR-4615885">
    <property type="pathway name" value="SUMOylation of DNA replication proteins"/>
</dbReference>
<dbReference type="Proteomes" id="UP000008143">
    <property type="component" value="Chromosome 6"/>
</dbReference>
<dbReference type="Bgee" id="ENSXETG00000005935">
    <property type="expression patterns" value="Expressed in egg cell and 15 other cell types or tissues"/>
</dbReference>
<dbReference type="GO" id="GO:0031965">
    <property type="term" value="C:nuclear membrane"/>
    <property type="evidence" value="ECO:0007669"/>
    <property type="project" value="UniProtKB-SubCell"/>
</dbReference>
<dbReference type="GO" id="GO:0005643">
    <property type="term" value="C:nuclear pore"/>
    <property type="evidence" value="ECO:0007669"/>
    <property type="project" value="UniProtKB-SubCell"/>
</dbReference>
<dbReference type="GO" id="GO:0008270">
    <property type="term" value="F:zinc ion binding"/>
    <property type="evidence" value="ECO:0007669"/>
    <property type="project" value="UniProtKB-KW"/>
</dbReference>
<dbReference type="GO" id="GO:0051028">
    <property type="term" value="P:mRNA transport"/>
    <property type="evidence" value="ECO:0007669"/>
    <property type="project" value="UniProtKB-KW"/>
</dbReference>
<dbReference type="GO" id="GO:0015031">
    <property type="term" value="P:protein transport"/>
    <property type="evidence" value="ECO:0007669"/>
    <property type="project" value="UniProtKB-KW"/>
</dbReference>
<dbReference type="Gene3D" id="4.10.1000.10">
    <property type="entry name" value="Zinc finger, CCCH-type"/>
    <property type="match status" value="1"/>
</dbReference>
<dbReference type="InterPro" id="IPR051767">
    <property type="entry name" value="Nucleoporin_NUP42"/>
</dbReference>
<dbReference type="InterPro" id="IPR000571">
    <property type="entry name" value="Znf_CCCH"/>
</dbReference>
<dbReference type="PANTHER" id="PTHR46527:SF1">
    <property type="entry name" value="NUCLEOPORIN NUP42"/>
    <property type="match status" value="1"/>
</dbReference>
<dbReference type="PANTHER" id="PTHR46527">
    <property type="entry name" value="NUCLEOPORIN-LIKE PROTEIN 2"/>
    <property type="match status" value="1"/>
</dbReference>
<dbReference type="SMART" id="SM00356">
    <property type="entry name" value="ZnF_C3H1"/>
    <property type="match status" value="1"/>
</dbReference>
<dbReference type="PROSITE" id="PS50103">
    <property type="entry name" value="ZF_C3H1"/>
    <property type="match status" value="1"/>
</dbReference>
<proteinExistence type="evidence at transcript level"/>
<reference key="1">
    <citation type="submission" date="2005-02" db="EMBL/GenBank/DDBJ databases">
        <authorList>
            <consortium name="NIH - Xenopus Gene Collection (XGC) project"/>
        </authorList>
    </citation>
    <scope>NUCLEOTIDE SEQUENCE [LARGE SCALE MRNA]</scope>
    <source>
        <strain>F6</strain>
    </source>
</reference>
<accession>Q5FVW4</accession>
<feature type="chain" id="PRO_0000204901" description="Nucleoporin NUP42">
    <location>
        <begin position="1"/>
        <end position="449"/>
    </location>
</feature>
<feature type="repeat" description="FG 1">
    <location>
        <begin position="231"/>
        <end position="232"/>
    </location>
</feature>
<feature type="repeat" description="FG 2">
    <location>
        <begin position="274"/>
        <end position="275"/>
    </location>
</feature>
<feature type="repeat" description="FG 3">
    <location>
        <begin position="284"/>
        <end position="285"/>
    </location>
</feature>
<feature type="repeat" description="FG 4">
    <location>
        <begin position="305"/>
        <end position="306"/>
    </location>
</feature>
<feature type="repeat" description="FG 5">
    <location>
        <begin position="314"/>
        <end position="315"/>
    </location>
</feature>
<feature type="repeat" description="FG 6">
    <location>
        <begin position="335"/>
        <end position="336"/>
    </location>
</feature>
<feature type="repeat" description="FG 7">
    <location>
        <begin position="347"/>
        <end position="348"/>
    </location>
</feature>
<feature type="zinc finger region" description="C3H1-type" evidence="3">
    <location>
        <begin position="1"/>
        <end position="25"/>
    </location>
</feature>
<feature type="region of interest" description="Disordered" evidence="4">
    <location>
        <begin position="22"/>
        <end position="84"/>
    </location>
</feature>
<feature type="region of interest" description="Disordered" evidence="4">
    <location>
        <begin position="218"/>
        <end position="237"/>
    </location>
</feature>
<feature type="compositionally biased region" description="Polar residues" evidence="4">
    <location>
        <begin position="47"/>
        <end position="83"/>
    </location>
</feature>
<feature type="compositionally biased region" description="Polar residues" evidence="4">
    <location>
        <begin position="218"/>
        <end position="227"/>
    </location>
</feature>
<gene>
    <name type="primary">nup42</name>
    <name type="synonym">nupl2</name>
</gene>
<protein>
    <recommendedName>
        <fullName evidence="5">Nucleoporin NUP42</fullName>
    </recommendedName>
    <alternativeName>
        <fullName>Nucleoporin-like protein 2</fullName>
    </alternativeName>
</protein>
<keyword id="KW-0472">Membrane</keyword>
<keyword id="KW-0479">Metal-binding</keyword>
<keyword id="KW-0509">mRNA transport</keyword>
<keyword id="KW-0906">Nuclear pore complex</keyword>
<keyword id="KW-0539">Nucleus</keyword>
<keyword id="KW-0653">Protein transport</keyword>
<keyword id="KW-1185">Reference proteome</keyword>
<keyword id="KW-0677">Repeat</keyword>
<keyword id="KW-0811">Translocation</keyword>
<keyword id="KW-0813">Transport</keyword>
<keyword id="KW-0862">Zinc</keyword>
<keyword id="KW-0863">Zinc-finger</keyword>
<evidence type="ECO:0000250" key="1"/>
<evidence type="ECO:0000250" key="2">
    <source>
        <dbReference type="UniProtKB" id="O15504"/>
    </source>
</evidence>
<evidence type="ECO:0000255" key="3">
    <source>
        <dbReference type="PROSITE-ProRule" id="PRU00723"/>
    </source>
</evidence>
<evidence type="ECO:0000256" key="4">
    <source>
        <dbReference type="SAM" id="MobiDB-lite"/>
    </source>
</evidence>
<evidence type="ECO:0000305" key="5"/>